<protein>
    <recommendedName>
        <fullName evidence="1">Large ribosomal subunit protein eL39</fullName>
    </recommendedName>
    <alternativeName>
        <fullName evidence="2">50S ribosomal protein L39e</fullName>
    </alternativeName>
</protein>
<sequence>MSRNKPVAKKFRLAKALKANSPIPIWIVLKTRGRVRYNPLRRNWRRNDLKV</sequence>
<evidence type="ECO:0000255" key="1">
    <source>
        <dbReference type="HAMAP-Rule" id="MF_00629"/>
    </source>
</evidence>
<evidence type="ECO:0000305" key="2"/>
<comment type="similarity">
    <text evidence="1">Belongs to the eukaryotic ribosomal protein eL39 family.</text>
</comment>
<comment type="sequence caution" evidence="2">
    <conflict type="erroneous initiation">
        <sequence resource="EMBL-CDS" id="AAK40683"/>
    </conflict>
</comment>
<name>RL39_SACS2</name>
<keyword id="KW-1185">Reference proteome</keyword>
<keyword id="KW-0687">Ribonucleoprotein</keyword>
<keyword id="KW-0689">Ribosomal protein</keyword>
<gene>
    <name evidence="1" type="primary">rpl39e</name>
    <name type="ordered locus">SSO5672</name>
</gene>
<proteinExistence type="inferred from homology"/>
<reference key="1">
    <citation type="journal article" date="2001" name="Proc. Natl. Acad. Sci. U.S.A.">
        <title>The complete genome of the crenarchaeon Sulfolobus solfataricus P2.</title>
        <authorList>
            <person name="She Q."/>
            <person name="Singh R.K."/>
            <person name="Confalonieri F."/>
            <person name="Zivanovic Y."/>
            <person name="Allard G."/>
            <person name="Awayez M.J."/>
            <person name="Chan-Weiher C.C.-Y."/>
            <person name="Clausen I.G."/>
            <person name="Curtis B.A."/>
            <person name="De Moors A."/>
            <person name="Erauso G."/>
            <person name="Fletcher C."/>
            <person name="Gordon P.M.K."/>
            <person name="Heikamp-de Jong I."/>
            <person name="Jeffries A.C."/>
            <person name="Kozera C.J."/>
            <person name="Medina N."/>
            <person name="Peng X."/>
            <person name="Thi-Ngoc H.P."/>
            <person name="Redder P."/>
            <person name="Schenk M.E."/>
            <person name="Theriault C."/>
            <person name="Tolstrup N."/>
            <person name="Charlebois R.L."/>
            <person name="Doolittle W.F."/>
            <person name="Duguet M."/>
            <person name="Gaasterland T."/>
            <person name="Garrett R.A."/>
            <person name="Ragan M.A."/>
            <person name="Sensen C.W."/>
            <person name="Van der Oost J."/>
        </authorList>
    </citation>
    <scope>NUCLEOTIDE SEQUENCE [LARGE SCALE GENOMIC DNA]</scope>
    <source>
        <strain>ATCC 35092 / DSM 1617 / JCM 11322 / P2</strain>
    </source>
</reference>
<accession>Q980F9</accession>
<dbReference type="EMBL" id="AE006641">
    <property type="protein sequence ID" value="AAK40683.1"/>
    <property type="status" value="ALT_INIT"/>
    <property type="molecule type" value="Genomic_DNA"/>
</dbReference>
<dbReference type="PIR" id="D90178">
    <property type="entry name" value="D90178"/>
</dbReference>
<dbReference type="RefSeq" id="WP_009990648.1">
    <property type="nucleotide sequence ID" value="NC_002754.1"/>
</dbReference>
<dbReference type="SMR" id="Q980F9"/>
<dbReference type="FunCoup" id="Q980F9">
    <property type="interactions" value="116"/>
</dbReference>
<dbReference type="STRING" id="273057.SSO5672"/>
<dbReference type="PaxDb" id="273057-SSO5672"/>
<dbReference type="EnsemblBacteria" id="AAK40683">
    <property type="protein sequence ID" value="AAK40683"/>
    <property type="gene ID" value="SSO5672"/>
</dbReference>
<dbReference type="KEGG" id="sso:SSO5672"/>
<dbReference type="PATRIC" id="fig|273057.12.peg.344"/>
<dbReference type="eggNOG" id="arCOG04177">
    <property type="taxonomic scope" value="Archaea"/>
</dbReference>
<dbReference type="HOGENOM" id="CLU_181948_4_0_2"/>
<dbReference type="InParanoid" id="Q980F9"/>
<dbReference type="PhylomeDB" id="Q980F9"/>
<dbReference type="Proteomes" id="UP000001974">
    <property type="component" value="Chromosome"/>
</dbReference>
<dbReference type="GO" id="GO:0022625">
    <property type="term" value="C:cytosolic large ribosomal subunit"/>
    <property type="evidence" value="ECO:0000318"/>
    <property type="project" value="GO_Central"/>
</dbReference>
<dbReference type="GO" id="GO:0003735">
    <property type="term" value="F:structural constituent of ribosome"/>
    <property type="evidence" value="ECO:0007669"/>
    <property type="project" value="InterPro"/>
</dbReference>
<dbReference type="GO" id="GO:0006412">
    <property type="term" value="P:translation"/>
    <property type="evidence" value="ECO:0007669"/>
    <property type="project" value="UniProtKB-UniRule"/>
</dbReference>
<dbReference type="FunFam" id="1.10.1620.10:FF:000001">
    <property type="entry name" value="60S ribosomal protein-like L39"/>
    <property type="match status" value="1"/>
</dbReference>
<dbReference type="Gene3D" id="1.10.1620.10">
    <property type="entry name" value="Ribosomal protein L39e"/>
    <property type="match status" value="1"/>
</dbReference>
<dbReference type="HAMAP" id="MF_00629">
    <property type="entry name" value="Ribosomal_eL39"/>
    <property type="match status" value="1"/>
</dbReference>
<dbReference type="InterPro" id="IPR000077">
    <property type="entry name" value="Ribosomal_eL39"/>
</dbReference>
<dbReference type="InterPro" id="IPR020083">
    <property type="entry name" value="Ribosomal_eL39_CS"/>
</dbReference>
<dbReference type="InterPro" id="IPR023626">
    <property type="entry name" value="Ribosomal_eL39_dom_sf"/>
</dbReference>
<dbReference type="NCBIfam" id="NF002316">
    <property type="entry name" value="PRK01242.1"/>
    <property type="match status" value="1"/>
</dbReference>
<dbReference type="PANTHER" id="PTHR19970:SF0">
    <property type="entry name" value="LARGE RIBOSOMAL SUBUNIT PROTEIN EL39"/>
    <property type="match status" value="1"/>
</dbReference>
<dbReference type="PANTHER" id="PTHR19970">
    <property type="entry name" value="RIBOSOMAL PROTEIN L39E"/>
    <property type="match status" value="1"/>
</dbReference>
<dbReference type="Pfam" id="PF00832">
    <property type="entry name" value="Ribosomal_L39"/>
    <property type="match status" value="1"/>
</dbReference>
<dbReference type="SUPFAM" id="SSF48662">
    <property type="entry name" value="Ribosomal protein L39e"/>
    <property type="match status" value="1"/>
</dbReference>
<dbReference type="PROSITE" id="PS00051">
    <property type="entry name" value="RIBOSOMAL_L39E"/>
    <property type="match status" value="1"/>
</dbReference>
<feature type="chain" id="PRO_0000127062" description="Large ribosomal subunit protein eL39">
    <location>
        <begin position="1"/>
        <end position="51"/>
    </location>
</feature>
<organism>
    <name type="scientific">Saccharolobus solfataricus (strain ATCC 35092 / DSM 1617 / JCM 11322 / P2)</name>
    <name type="common">Sulfolobus solfataricus</name>
    <dbReference type="NCBI Taxonomy" id="273057"/>
    <lineage>
        <taxon>Archaea</taxon>
        <taxon>Thermoproteota</taxon>
        <taxon>Thermoprotei</taxon>
        <taxon>Sulfolobales</taxon>
        <taxon>Sulfolobaceae</taxon>
        <taxon>Saccharolobus</taxon>
    </lineage>
</organism>